<keyword id="KW-0112">Calmodulin-binding</keyword>
<keyword id="KW-0963">Cytoplasm</keyword>
<keyword id="KW-0274">FAD</keyword>
<keyword id="KW-0285">Flavoprotein</keyword>
<keyword id="KW-0288">FMN</keyword>
<keyword id="KW-0349">Heme</keyword>
<keyword id="KW-0408">Iron</keyword>
<keyword id="KW-0479">Metal-binding</keyword>
<keyword id="KW-0521">NADP</keyword>
<keyword id="KW-0560">Oxidoreductase</keyword>
<keyword id="KW-1185">Reference proteome</keyword>
<keyword id="KW-0862">Zinc</keyword>
<proteinExistence type="evidence at transcript level"/>
<organism>
    <name type="scientific">Gallus gallus</name>
    <name type="common">Chicken</name>
    <dbReference type="NCBI Taxonomy" id="9031"/>
    <lineage>
        <taxon>Eukaryota</taxon>
        <taxon>Metazoa</taxon>
        <taxon>Chordata</taxon>
        <taxon>Craniata</taxon>
        <taxon>Vertebrata</taxon>
        <taxon>Euteleostomi</taxon>
        <taxon>Archelosauria</taxon>
        <taxon>Archosauria</taxon>
        <taxon>Dinosauria</taxon>
        <taxon>Saurischia</taxon>
        <taxon>Theropoda</taxon>
        <taxon>Coelurosauria</taxon>
        <taxon>Aves</taxon>
        <taxon>Neognathae</taxon>
        <taxon>Galloanserae</taxon>
        <taxon>Galliformes</taxon>
        <taxon>Phasianidae</taxon>
        <taxon>Phasianinae</taxon>
        <taxon>Gallus</taxon>
    </lineage>
</organism>
<dbReference type="EC" id="1.14.13.39" evidence="3"/>
<dbReference type="EMBL" id="U46504">
    <property type="protein sequence ID" value="AAC59886.1"/>
    <property type="molecule type" value="mRNA"/>
</dbReference>
<dbReference type="EMBL" id="U34045">
    <property type="protein sequence ID" value="AAB17499.1"/>
    <property type="molecule type" value="mRNA"/>
</dbReference>
<dbReference type="EMBL" id="D85422">
    <property type="protein sequence ID" value="BAA12817.1"/>
    <property type="molecule type" value="mRNA"/>
</dbReference>
<dbReference type="RefSeq" id="NP_990292.1">
    <property type="nucleotide sequence ID" value="NM_204961.1"/>
</dbReference>
<dbReference type="SMR" id="Q90703"/>
<dbReference type="FunCoup" id="Q90703">
    <property type="interactions" value="81"/>
</dbReference>
<dbReference type="STRING" id="9031.ENSGALP00000058328"/>
<dbReference type="PaxDb" id="9031-ENSGALP00000034026"/>
<dbReference type="GeneID" id="395807"/>
<dbReference type="KEGG" id="gga:395807"/>
<dbReference type="CTD" id="4843"/>
<dbReference type="VEuPathDB" id="HostDB:geneid_395807"/>
<dbReference type="eggNOG" id="KOG1158">
    <property type="taxonomic scope" value="Eukaryota"/>
</dbReference>
<dbReference type="InParanoid" id="Q90703"/>
<dbReference type="OrthoDB" id="1688044at2759"/>
<dbReference type="PhylomeDB" id="Q90703"/>
<dbReference type="PRO" id="PR:Q90703"/>
<dbReference type="Proteomes" id="UP000000539">
    <property type="component" value="Unassembled WGS sequence"/>
</dbReference>
<dbReference type="GO" id="GO:0005829">
    <property type="term" value="C:cytosol"/>
    <property type="evidence" value="ECO:0000318"/>
    <property type="project" value="GO_Central"/>
</dbReference>
<dbReference type="GO" id="GO:0005634">
    <property type="term" value="C:nucleus"/>
    <property type="evidence" value="ECO:0000318"/>
    <property type="project" value="GO_Central"/>
</dbReference>
<dbReference type="GO" id="GO:0005886">
    <property type="term" value="C:plasma membrane"/>
    <property type="evidence" value="ECO:0000318"/>
    <property type="project" value="GO_Central"/>
</dbReference>
<dbReference type="GO" id="GO:0005516">
    <property type="term" value="F:calmodulin binding"/>
    <property type="evidence" value="ECO:0007669"/>
    <property type="project" value="UniProtKB-KW"/>
</dbReference>
<dbReference type="GO" id="GO:0050660">
    <property type="term" value="F:flavin adenine dinucleotide binding"/>
    <property type="evidence" value="ECO:0000318"/>
    <property type="project" value="GO_Central"/>
</dbReference>
<dbReference type="GO" id="GO:0010181">
    <property type="term" value="F:FMN binding"/>
    <property type="evidence" value="ECO:0000318"/>
    <property type="project" value="GO_Central"/>
</dbReference>
<dbReference type="GO" id="GO:0020037">
    <property type="term" value="F:heme binding"/>
    <property type="evidence" value="ECO:0007669"/>
    <property type="project" value="InterPro"/>
</dbReference>
<dbReference type="GO" id="GO:0046872">
    <property type="term" value="F:metal ion binding"/>
    <property type="evidence" value="ECO:0007669"/>
    <property type="project" value="UniProtKB-KW"/>
</dbReference>
<dbReference type="GO" id="GO:0050661">
    <property type="term" value="F:NADP binding"/>
    <property type="evidence" value="ECO:0007669"/>
    <property type="project" value="InterPro"/>
</dbReference>
<dbReference type="GO" id="GO:0004517">
    <property type="term" value="F:nitric-oxide synthase activity"/>
    <property type="evidence" value="ECO:0000250"/>
    <property type="project" value="UniProtKB"/>
</dbReference>
<dbReference type="GO" id="GO:0006527">
    <property type="term" value="P:arginine catabolic process"/>
    <property type="evidence" value="ECO:0000318"/>
    <property type="project" value="GO_Central"/>
</dbReference>
<dbReference type="GO" id="GO:0042742">
    <property type="term" value="P:defense response to bacterium"/>
    <property type="evidence" value="ECO:0000318"/>
    <property type="project" value="GO_Central"/>
</dbReference>
<dbReference type="GO" id="GO:0006954">
    <property type="term" value="P:inflammatory response"/>
    <property type="evidence" value="ECO:0000318"/>
    <property type="project" value="GO_Central"/>
</dbReference>
<dbReference type="GO" id="GO:0045776">
    <property type="term" value="P:negative regulation of blood pressure"/>
    <property type="evidence" value="ECO:0000318"/>
    <property type="project" value="GO_Central"/>
</dbReference>
<dbReference type="GO" id="GO:0006809">
    <property type="term" value="P:nitric oxide biosynthetic process"/>
    <property type="evidence" value="ECO:0000318"/>
    <property type="project" value="GO_Central"/>
</dbReference>
<dbReference type="GO" id="GO:0007263">
    <property type="term" value="P:nitric oxide mediated signal transduction"/>
    <property type="evidence" value="ECO:0000318"/>
    <property type="project" value="GO_Central"/>
</dbReference>
<dbReference type="GO" id="GO:0018119">
    <property type="term" value="P:peptidyl-cysteine S-nitrosylation"/>
    <property type="evidence" value="ECO:0000250"/>
    <property type="project" value="UniProtKB"/>
</dbReference>
<dbReference type="GO" id="GO:0032755">
    <property type="term" value="P:positive regulation of interleukin-6 production"/>
    <property type="evidence" value="ECO:0000250"/>
    <property type="project" value="UniProtKB"/>
</dbReference>
<dbReference type="GO" id="GO:0032757">
    <property type="term" value="P:positive regulation of interleukin-8 production"/>
    <property type="evidence" value="ECO:0000250"/>
    <property type="project" value="UniProtKB"/>
</dbReference>
<dbReference type="GO" id="GO:0032310">
    <property type="term" value="P:prostaglandin secretion"/>
    <property type="evidence" value="ECO:0000250"/>
    <property type="project" value="UniProtKB"/>
</dbReference>
<dbReference type="GO" id="GO:1900015">
    <property type="term" value="P:regulation of cytokine production involved in inflammatory response"/>
    <property type="evidence" value="ECO:0000250"/>
    <property type="project" value="UniProtKB"/>
</dbReference>
<dbReference type="GO" id="GO:0009725">
    <property type="term" value="P:response to hormone"/>
    <property type="evidence" value="ECO:0000318"/>
    <property type="project" value="GO_Central"/>
</dbReference>
<dbReference type="GO" id="GO:0032496">
    <property type="term" value="P:response to lipopolysaccharide"/>
    <property type="evidence" value="ECO:0000318"/>
    <property type="project" value="GO_Central"/>
</dbReference>
<dbReference type="CDD" id="cd06202">
    <property type="entry name" value="Nitric_oxide_synthase"/>
    <property type="match status" value="1"/>
</dbReference>
<dbReference type="CDD" id="cd00795">
    <property type="entry name" value="NOS_oxygenase_euk"/>
    <property type="match status" value="1"/>
</dbReference>
<dbReference type="FunFam" id="1.20.990.10:FF:000006">
    <property type="entry name" value="Nitric oxide synthase"/>
    <property type="match status" value="1"/>
</dbReference>
<dbReference type="FunFam" id="3.40.50.360:FF:000039">
    <property type="entry name" value="Nitric oxide synthase"/>
    <property type="match status" value="1"/>
</dbReference>
<dbReference type="FunFam" id="3.40.50.80:FF:000003">
    <property type="entry name" value="Nitric oxide synthase"/>
    <property type="match status" value="1"/>
</dbReference>
<dbReference type="FunFam" id="3.90.440.10:FF:000005">
    <property type="entry name" value="Nitric oxide synthase, inducible"/>
    <property type="match status" value="1"/>
</dbReference>
<dbReference type="Gene3D" id="3.40.50.360">
    <property type="match status" value="2"/>
</dbReference>
<dbReference type="Gene3D" id="6.10.250.410">
    <property type="match status" value="1"/>
</dbReference>
<dbReference type="Gene3D" id="1.20.990.10">
    <property type="entry name" value="NADPH-cytochrome p450 Reductase, Chain A, domain 3"/>
    <property type="match status" value="1"/>
</dbReference>
<dbReference type="Gene3D" id="3.90.340.10">
    <property type="entry name" value="Nitric Oxide Synthase, Chain A, domain 1"/>
    <property type="match status" value="1"/>
</dbReference>
<dbReference type="Gene3D" id="3.90.1230.10">
    <property type="entry name" value="Nitric Oxide Synthase, Chain A, domain 3"/>
    <property type="match status" value="1"/>
</dbReference>
<dbReference type="Gene3D" id="3.90.440.10">
    <property type="entry name" value="Nitric Oxide Synthase,Heme Domain,Chain A domain 2"/>
    <property type="match status" value="1"/>
</dbReference>
<dbReference type="Gene3D" id="3.40.50.80">
    <property type="entry name" value="Nucleotide-binding domain of ferredoxin-NADP reductase (FNR) module"/>
    <property type="match status" value="1"/>
</dbReference>
<dbReference type="Gene3D" id="2.40.30.10">
    <property type="entry name" value="Translation factors"/>
    <property type="match status" value="1"/>
</dbReference>
<dbReference type="InterPro" id="IPR003097">
    <property type="entry name" value="CysJ-like_FAD-binding"/>
</dbReference>
<dbReference type="InterPro" id="IPR017927">
    <property type="entry name" value="FAD-bd_FR_type"/>
</dbReference>
<dbReference type="InterPro" id="IPR001094">
    <property type="entry name" value="Flavdoxin-like"/>
</dbReference>
<dbReference type="InterPro" id="IPR008254">
    <property type="entry name" value="Flavodoxin/NO_synth"/>
</dbReference>
<dbReference type="InterPro" id="IPR001709">
    <property type="entry name" value="Flavoprot_Pyr_Nucl_cyt_Rdtase"/>
</dbReference>
<dbReference type="InterPro" id="IPR029039">
    <property type="entry name" value="Flavoprotein-like_sf"/>
</dbReference>
<dbReference type="InterPro" id="IPR039261">
    <property type="entry name" value="FNR_nucleotide-bd"/>
</dbReference>
<dbReference type="InterPro" id="IPR023173">
    <property type="entry name" value="NADPH_Cyt_P450_Rdtase_alpha"/>
</dbReference>
<dbReference type="InterPro" id="IPR050607">
    <property type="entry name" value="NOS"/>
</dbReference>
<dbReference type="InterPro" id="IPR044943">
    <property type="entry name" value="NOS_dom_1"/>
</dbReference>
<dbReference type="InterPro" id="IPR044940">
    <property type="entry name" value="NOS_dom_2"/>
</dbReference>
<dbReference type="InterPro" id="IPR044944">
    <property type="entry name" value="NOS_dom_3"/>
</dbReference>
<dbReference type="InterPro" id="IPR012144">
    <property type="entry name" value="NOS_euk"/>
</dbReference>
<dbReference type="InterPro" id="IPR004030">
    <property type="entry name" value="NOS_N"/>
</dbReference>
<dbReference type="InterPro" id="IPR036119">
    <property type="entry name" value="NOS_N_sf"/>
</dbReference>
<dbReference type="InterPro" id="IPR001433">
    <property type="entry name" value="OxRdtase_FAD/NAD-bd"/>
</dbReference>
<dbReference type="InterPro" id="IPR017938">
    <property type="entry name" value="Riboflavin_synthase-like_b-brl"/>
</dbReference>
<dbReference type="PANTHER" id="PTHR43410:SF4">
    <property type="entry name" value="NITRIC OXIDE SYNTHASE"/>
    <property type="match status" value="1"/>
</dbReference>
<dbReference type="PANTHER" id="PTHR43410">
    <property type="entry name" value="NITRIC OXIDE SYNTHASE OXYGENASE"/>
    <property type="match status" value="1"/>
</dbReference>
<dbReference type="Pfam" id="PF00667">
    <property type="entry name" value="FAD_binding_1"/>
    <property type="match status" value="1"/>
</dbReference>
<dbReference type="Pfam" id="PF00258">
    <property type="entry name" value="Flavodoxin_1"/>
    <property type="match status" value="1"/>
</dbReference>
<dbReference type="Pfam" id="PF00175">
    <property type="entry name" value="NAD_binding_1"/>
    <property type="match status" value="1"/>
</dbReference>
<dbReference type="Pfam" id="PF02898">
    <property type="entry name" value="NO_synthase"/>
    <property type="match status" value="1"/>
</dbReference>
<dbReference type="PIRSF" id="PIRSF000333">
    <property type="entry name" value="NOS"/>
    <property type="match status" value="1"/>
</dbReference>
<dbReference type="PRINTS" id="PR00369">
    <property type="entry name" value="FLAVODOXIN"/>
</dbReference>
<dbReference type="PRINTS" id="PR00371">
    <property type="entry name" value="FPNCR"/>
</dbReference>
<dbReference type="SUPFAM" id="SSF52343">
    <property type="entry name" value="Ferredoxin reductase-like, C-terminal NADP-linked domain"/>
    <property type="match status" value="1"/>
</dbReference>
<dbReference type="SUPFAM" id="SSF52218">
    <property type="entry name" value="Flavoproteins"/>
    <property type="match status" value="1"/>
</dbReference>
<dbReference type="SUPFAM" id="SSF56512">
    <property type="entry name" value="Nitric oxide (NO) synthase oxygenase domain"/>
    <property type="match status" value="1"/>
</dbReference>
<dbReference type="SUPFAM" id="SSF63380">
    <property type="entry name" value="Riboflavin synthase domain-like"/>
    <property type="match status" value="1"/>
</dbReference>
<dbReference type="PROSITE" id="PS51384">
    <property type="entry name" value="FAD_FR"/>
    <property type="match status" value="1"/>
</dbReference>
<dbReference type="PROSITE" id="PS50902">
    <property type="entry name" value="FLAVODOXIN_LIKE"/>
    <property type="match status" value="1"/>
</dbReference>
<dbReference type="PROSITE" id="PS60001">
    <property type="entry name" value="NOS"/>
    <property type="match status" value="1"/>
</dbReference>
<evidence type="ECO:0000250" key="1">
    <source>
        <dbReference type="UniProtKB" id="P29474"/>
    </source>
</evidence>
<evidence type="ECO:0000250" key="2">
    <source>
        <dbReference type="UniProtKB" id="P29476"/>
    </source>
</evidence>
<evidence type="ECO:0000250" key="3">
    <source>
        <dbReference type="UniProtKB" id="P35228"/>
    </source>
</evidence>
<evidence type="ECO:0000255" key="4">
    <source>
        <dbReference type="PROSITE-ProRule" id="PRU00088"/>
    </source>
</evidence>
<evidence type="ECO:0000255" key="5">
    <source>
        <dbReference type="PROSITE-ProRule" id="PRU00716"/>
    </source>
</evidence>
<evidence type="ECO:0000305" key="6"/>
<feature type="chain" id="PRO_0000170938" description="Nitric oxide synthase, inducible">
    <location>
        <begin position="1"/>
        <end position="1136"/>
    </location>
</feature>
<feature type="domain" description="Flavodoxin-like" evidence="4">
    <location>
        <begin position="536"/>
        <end position="674"/>
    </location>
</feature>
<feature type="domain" description="FAD-binding FR-type" evidence="5">
    <location>
        <begin position="727"/>
        <end position="967"/>
    </location>
</feature>
<feature type="region of interest" description="Calmodulin-binding" evidence="3">
    <location>
        <begin position="512"/>
        <end position="532"/>
    </location>
</feature>
<feature type="binding site" evidence="3">
    <location>
        <position position="107"/>
    </location>
    <ligand>
        <name>Zn(2+)</name>
        <dbReference type="ChEBI" id="CHEBI:29105"/>
        <note>ligand shared between homodimeric partners</note>
    </ligand>
</feature>
<feature type="binding site" evidence="3">
    <location>
        <position position="112"/>
    </location>
    <ligand>
        <name>Zn(2+)</name>
        <dbReference type="ChEBI" id="CHEBI:29105"/>
        <note>ligand shared between homodimeric partners</note>
    </ligand>
</feature>
<feature type="binding site" description="axial binding residue" evidence="1">
    <location>
        <position position="197"/>
    </location>
    <ligand>
        <name>heme b</name>
        <dbReference type="ChEBI" id="CHEBI:60344"/>
    </ligand>
    <ligandPart>
        <name>Fe</name>
        <dbReference type="ChEBI" id="CHEBI:18248"/>
    </ligandPart>
</feature>
<feature type="binding site" evidence="1">
    <location>
        <position position="260"/>
    </location>
    <ligand>
        <name>L-arginine</name>
        <dbReference type="ChEBI" id="CHEBI:32682"/>
    </ligand>
</feature>
<feature type="binding site" evidence="1">
    <location>
        <position position="369"/>
    </location>
    <ligand>
        <name>L-arginine</name>
        <dbReference type="ChEBI" id="CHEBI:32682"/>
    </ligand>
</feature>
<feature type="binding site" evidence="1">
    <location>
        <position position="370"/>
    </location>
    <ligand>
        <name>L-arginine</name>
        <dbReference type="ChEBI" id="CHEBI:32682"/>
    </ligand>
</feature>
<feature type="binding site" evidence="1">
    <location>
        <position position="374"/>
    </location>
    <ligand>
        <name>L-arginine</name>
        <dbReference type="ChEBI" id="CHEBI:32682"/>
    </ligand>
</feature>
<feature type="binding site" evidence="3">
    <location>
        <position position="378"/>
    </location>
    <ligand>
        <name>(6R)-L-erythro-5,6,7,8-tetrahydrobiopterin</name>
        <dbReference type="ChEBI" id="CHEBI:59560"/>
    </ligand>
</feature>
<feature type="binding site" evidence="3">
    <location>
        <position position="459"/>
    </location>
    <ligand>
        <name>(6R)-L-erythro-5,6,7,8-tetrahydrobiopterin</name>
        <dbReference type="ChEBI" id="CHEBI:59560"/>
    </ligand>
</feature>
<feature type="binding site" evidence="1">
    <location>
        <position position="460"/>
    </location>
    <ligand>
        <name>(6R)-L-erythro-5,6,7,8-tetrahydrobiopterin</name>
        <dbReference type="ChEBI" id="CHEBI:59560"/>
    </ligand>
</feature>
<feature type="binding site" evidence="1">
    <location>
        <position position="473"/>
    </location>
    <ligand>
        <name>(6R)-L-erythro-5,6,7,8-tetrahydrobiopterin</name>
        <dbReference type="ChEBI" id="CHEBI:59560"/>
    </ligand>
</feature>
<feature type="binding site" evidence="1">
    <location>
        <position position="488"/>
    </location>
    <ligand>
        <name>heme b</name>
        <dbReference type="ChEBI" id="CHEBI:60344"/>
    </ligand>
</feature>
<feature type="binding site" evidence="3">
    <location>
        <position position="542"/>
    </location>
    <ligand>
        <name>FMN</name>
        <dbReference type="ChEBI" id="CHEBI:58210"/>
    </ligand>
</feature>
<feature type="binding site" evidence="3">
    <location>
        <position position="543"/>
    </location>
    <ligand>
        <name>FMN</name>
        <dbReference type="ChEBI" id="CHEBI:58210"/>
    </ligand>
</feature>
<feature type="binding site" evidence="3">
    <location>
        <position position="544"/>
    </location>
    <ligand>
        <name>FMN</name>
        <dbReference type="ChEBI" id="CHEBI:58210"/>
    </ligand>
</feature>
<feature type="binding site" evidence="3">
    <location>
        <position position="546"/>
    </location>
    <ligand>
        <name>FMN</name>
        <dbReference type="ChEBI" id="CHEBI:58210"/>
    </ligand>
</feature>
<feature type="binding site" evidence="3">
    <location>
        <position position="547"/>
    </location>
    <ligand>
        <name>FMN</name>
        <dbReference type="ChEBI" id="CHEBI:58210"/>
    </ligand>
</feature>
<feature type="binding site" evidence="3">
    <location>
        <position position="588"/>
    </location>
    <ligand>
        <name>FMN</name>
        <dbReference type="ChEBI" id="CHEBI:58210"/>
    </ligand>
</feature>
<feature type="binding site" evidence="3">
    <location>
        <position position="589"/>
    </location>
    <ligand>
        <name>FMN</name>
        <dbReference type="ChEBI" id="CHEBI:58210"/>
    </ligand>
</feature>
<feature type="binding site" evidence="3">
    <location>
        <position position="625"/>
    </location>
    <ligand>
        <name>FMN</name>
        <dbReference type="ChEBI" id="CHEBI:58210"/>
    </ligand>
</feature>
<feature type="binding site" evidence="3">
    <location>
        <position position="632"/>
    </location>
    <ligand>
        <name>FMN</name>
        <dbReference type="ChEBI" id="CHEBI:58210"/>
    </ligand>
</feature>
<feature type="binding site" evidence="3">
    <location>
        <position position="658"/>
    </location>
    <ligand>
        <name>FMN</name>
        <dbReference type="ChEBI" id="CHEBI:58210"/>
    </ligand>
</feature>
<feature type="binding site" evidence="3">
    <location>
        <position position="662"/>
    </location>
    <ligand>
        <name>FMN</name>
        <dbReference type="ChEBI" id="CHEBI:58210"/>
    </ligand>
</feature>
<feature type="binding site" evidence="2">
    <location>
        <position position="747"/>
    </location>
    <ligand>
        <name>NADP(+)</name>
        <dbReference type="ChEBI" id="CHEBI:58349"/>
    </ligand>
</feature>
<feature type="binding site" evidence="2">
    <location>
        <position position="769"/>
    </location>
    <ligand>
        <name>FAD</name>
        <dbReference type="ChEBI" id="CHEBI:57692"/>
    </ligand>
</feature>
<feature type="binding site" evidence="2">
    <location>
        <position position="903"/>
    </location>
    <ligand>
        <name>FAD</name>
        <dbReference type="ChEBI" id="CHEBI:57692"/>
    </ligand>
</feature>
<feature type="binding site" evidence="2">
    <location>
        <position position="905"/>
    </location>
    <ligand>
        <name>FAD</name>
        <dbReference type="ChEBI" id="CHEBI:57692"/>
    </ligand>
</feature>
<feature type="binding site" evidence="2">
    <location>
        <position position="906"/>
    </location>
    <ligand>
        <name>FAD</name>
        <dbReference type="ChEBI" id="CHEBI:57692"/>
    </ligand>
</feature>
<feature type="binding site" evidence="2">
    <location>
        <position position="921"/>
    </location>
    <ligand>
        <name>FAD</name>
        <dbReference type="ChEBI" id="CHEBI:57692"/>
    </ligand>
</feature>
<feature type="binding site" evidence="2">
    <location>
        <position position="923"/>
    </location>
    <ligand>
        <name>FAD</name>
        <dbReference type="ChEBI" id="CHEBI:57692"/>
    </ligand>
</feature>
<feature type="binding site" evidence="2">
    <location>
        <position position="927"/>
    </location>
    <ligand>
        <name>FAD</name>
        <dbReference type="ChEBI" id="CHEBI:57692"/>
    </ligand>
</feature>
<feature type="binding site" evidence="2">
    <location>
        <position position="940"/>
    </location>
    <ligand>
        <name>FAD</name>
        <dbReference type="ChEBI" id="CHEBI:57692"/>
    </ligand>
</feature>
<feature type="binding site" evidence="2">
    <location>
        <position position="941"/>
    </location>
    <ligand>
        <name>FAD</name>
        <dbReference type="ChEBI" id="CHEBI:57692"/>
    </ligand>
</feature>
<feature type="binding site" evidence="2">
    <location>
        <position position="942"/>
    </location>
    <ligand>
        <name>FAD</name>
        <dbReference type="ChEBI" id="CHEBI:57692"/>
    </ligand>
</feature>
<feature type="binding site" evidence="2">
    <location>
        <position position="981"/>
    </location>
    <ligand>
        <name>NADP(+)</name>
        <dbReference type="ChEBI" id="CHEBI:58349"/>
    </ligand>
</feature>
<feature type="binding site" evidence="2">
    <location>
        <position position="1014"/>
    </location>
    <ligand>
        <name>NADP(+)</name>
        <dbReference type="ChEBI" id="CHEBI:58349"/>
    </ligand>
</feature>
<feature type="binding site" evidence="2">
    <location>
        <position position="1043"/>
    </location>
    <ligand>
        <name>NADP(+)</name>
        <dbReference type="ChEBI" id="CHEBI:58349"/>
    </ligand>
</feature>
<feature type="binding site" evidence="2">
    <location>
        <position position="1044"/>
    </location>
    <ligand>
        <name>NADP(+)</name>
        <dbReference type="ChEBI" id="CHEBI:58349"/>
    </ligand>
</feature>
<feature type="binding site" evidence="2">
    <location>
        <position position="1050"/>
    </location>
    <ligand>
        <name>NADP(+)</name>
        <dbReference type="ChEBI" id="CHEBI:58349"/>
    </ligand>
</feature>
<feature type="binding site" evidence="2">
    <location>
        <position position="1052"/>
    </location>
    <ligand>
        <name>NADP(+)</name>
        <dbReference type="ChEBI" id="CHEBI:58349"/>
    </ligand>
</feature>
<feature type="binding site" evidence="2">
    <location>
        <position position="1054"/>
    </location>
    <ligand>
        <name>NADP(+)</name>
        <dbReference type="ChEBI" id="CHEBI:58349"/>
    </ligand>
</feature>
<feature type="binding site" evidence="2">
    <location>
        <position position="1087"/>
    </location>
    <ligand>
        <name>NADP(+)</name>
        <dbReference type="ChEBI" id="CHEBI:58349"/>
    </ligand>
</feature>
<feature type="sequence conflict" description="In Ref. 2; AAB17499." evidence="6" ref="2">
    <original>S</original>
    <variation>T</variation>
    <location>
        <position position="400"/>
    </location>
</feature>
<feature type="sequence conflict" description="In Ref. 3; BAA12817." evidence="6" ref="3">
    <original>R</original>
    <variation>S</variation>
    <location>
        <position position="873"/>
    </location>
</feature>
<gene>
    <name type="primary">NOS2</name>
</gene>
<protein>
    <recommendedName>
        <fullName>Nitric oxide synthase, inducible</fullName>
        <ecNumber evidence="3">1.14.13.39</ecNumber>
    </recommendedName>
    <alternativeName>
        <fullName>Inducible NO synthase</fullName>
        <shortName>Inducible NOS</shortName>
        <shortName>iNOS</shortName>
    </alternativeName>
    <alternativeName>
        <fullName>Macrophage NOS</fullName>
    </alternativeName>
    <alternativeName>
        <fullName>NOS type II</fullName>
    </alternativeName>
    <alternativeName>
        <fullName>Peptidyl-cysteine S-nitrosylase NOS2</fullName>
    </alternativeName>
</protein>
<name>NOS2_CHICK</name>
<accession>Q90703</accession>
<accession>Q90677</accession>
<accession>Q90934</accession>
<reference key="1">
    <citation type="journal article" date="1996" name="J. Biol. Chem.">
        <title>Molecular cloning and expression of an avian macrophage nitric-oxide synthase cDNA and the analysis of the genomic 5'-flanking region.</title>
        <authorList>
            <person name="Lin A.W."/>
            <person name="Chang C.C."/>
            <person name="McCormick C.C."/>
        </authorList>
    </citation>
    <scope>NUCLEOTIDE SEQUENCE [MRNA]</scope>
</reference>
<reference key="2">
    <citation type="journal article" date="1996" name="J. Cell. Biochem.">
        <title>Proinflammatory agents, IL-8 and IL-10, upregulate inducible nitric oxide synthase expression and nitric oxide production in avian osteoclast-like cells.</title>
        <authorList>
            <person name="Sunyer T."/>
            <person name="Rothe L."/>
            <person name="Jiang X."/>
            <person name="Osdoby P."/>
            <person name="Collin-Osdoby P."/>
        </authorList>
    </citation>
    <scope>NUCLEOTIDE SEQUENCE [MRNA] OF 171-472</scope>
    <source>
        <tissue>Osteoclast</tissue>
    </source>
</reference>
<reference key="3">
    <citation type="journal article" date="1998" name="Cardiovasc. Res.">
        <title>Molecular cloning and expression of inducible nitric oxide synthase in chick embryonic ventricular myocytes.</title>
        <authorList>
            <person name="Shimizu T."/>
            <person name="Kinugawa K."/>
            <person name="Sugishita Y."/>
            <person name="Sugishita K."/>
            <person name="Harada K."/>
            <person name="Matsui H."/>
            <person name="Kohmoto O."/>
            <person name="Serizawa T."/>
            <person name="Takahashi T."/>
        </authorList>
    </citation>
    <scope>NUCLEOTIDE SEQUENCE [MRNA] OF 646-986</scope>
    <source>
        <tissue>Heart</tissue>
    </source>
</reference>
<sequence length="1136" mass="129649">MLCPWQFAFKPHAVKNQSSEEKDINNNVEKDVKVHSFVKDDAKLHSLSKKQMKMSPIITSAEKHPQNGIKASNQISRCPRHVKVRNMENGSSLLDTLHLTAKEVINCRTRACQGALMTPKGLVRSTRDGPVPPAELLPQAVDFVKQYYSSFKELKIEEHLARLETVTKEIETTGTYHLTKDELIFAAKQAWRNAPRCIGRIQWSNLQVFDARDCKTAKEMFEYICRHIQYATNNGNIRSAITIFPQRTDGKHDFRVWNSQLIRYAGYQMPDGSVIGDPASVEFTKLCIELGWKPKYGRFDVVPLILQANGQDPEIFEYPPEIILEVPMEHPKYEWFKELDLKWYALPAVANMLLEVGGLEFTACPFNGWYMGTEIGVRDFCDVQRYNILKEVGRRMGLESNKLASLWKDRAVVEINVAVLHSFQKQNVTIMDHHSAAESFMKYMQNEYRVRGGCPADWVWIVPPMSGSITPVFHQEMLNYVLTPFFYYQVDAWKTHIWHDETRRPKKREIKLSILAKAVLLASLLLQKTMAARPKVTVIYATETGKSETLANSLCSLFSCAFNTKILCMDEYNISDLEKETLLLVVTSTFGNGDSPNNGKTLKNSLLTLKLLRKNIRYAVFGLGSTMYPEFCAFAHAIDQKLSQLGALQLTPVGEGDELNGQEEAFRTWAVTAFKTACDIFDIRGKNSIQLPEIYTSDDSWNPKKHRIVYDSQTMDLTKALSDIHGKNVIPMKLKFRQNLQSLKSSRVTILVKLSCETNQEVHYLPGEHIGISPGNQPELVHGLIARVKDAPPADQTIRLETCTEGGYWASEKKIPACTLSQALTYLLDITTPPTQQLLKKLSQLVTAEGDKQRLEVLCHSTEEYNKWKFYNRPNILEVLEEFPSAEVSTAFLLTQLPLLKPRYYSVSSSCDMTPREIHLTVAVVNYRTRDGQGPLHHGVCSTWLNKIALNETVPCFVRSADGFRLPKEPAKPCILIGPGTGIAPFRSFWQQRLYDLEKKGIKGGDMILLFGCRHPDMDHIYKEEVEEMKRKGVLKEVFTAYSRQPGQPKVYVQDILQNELETKVCNILHKEEGHLYVCGDVRMARDVAQTLKRMLVKKLNHTEQQAEEYFFQLKSQKRYHEDIFGAVFPHEVKRI</sequence>
<comment type="function">
    <text evidence="3">Produces nitric oxide (NO) which is a messenger molecule with diverse functions throughout the body. NO may serve as both a paracrine and autocrine signal for modulating osteoclast bone resorption. Also has nitrosylase activity and mediates cysteine S-nitrosylation of cytoplasmic target proteins such COX2 (By similarity).</text>
</comment>
<comment type="catalytic activity">
    <reaction evidence="3">
        <text>2 L-arginine + 3 NADPH + 4 O2 + H(+) = 2 L-citrulline + 2 nitric oxide + 3 NADP(+) + 4 H2O</text>
        <dbReference type="Rhea" id="RHEA:19897"/>
        <dbReference type="ChEBI" id="CHEBI:15377"/>
        <dbReference type="ChEBI" id="CHEBI:15378"/>
        <dbReference type="ChEBI" id="CHEBI:15379"/>
        <dbReference type="ChEBI" id="CHEBI:16480"/>
        <dbReference type="ChEBI" id="CHEBI:32682"/>
        <dbReference type="ChEBI" id="CHEBI:57743"/>
        <dbReference type="ChEBI" id="CHEBI:57783"/>
        <dbReference type="ChEBI" id="CHEBI:58349"/>
        <dbReference type="EC" id="1.14.13.39"/>
    </reaction>
    <physiologicalReaction direction="left-to-right" evidence="3">
        <dbReference type="Rhea" id="RHEA:19898"/>
    </physiologicalReaction>
</comment>
<comment type="cofactor">
    <cofactor evidence="3">
        <name>heme b</name>
        <dbReference type="ChEBI" id="CHEBI:60344"/>
    </cofactor>
</comment>
<comment type="cofactor">
    <cofactor evidence="2">
        <name>FAD</name>
        <dbReference type="ChEBI" id="CHEBI:57692"/>
    </cofactor>
    <text evidence="2">Binds 1 FAD.</text>
</comment>
<comment type="cofactor">
    <cofactor evidence="3">
        <name>FMN</name>
        <dbReference type="ChEBI" id="CHEBI:58210"/>
    </cofactor>
    <text evidence="3">Binds 1 FMN.</text>
</comment>
<comment type="cofactor">
    <cofactor evidence="3">
        <name>(6R)-L-erythro-5,6,7,8-tetrahydrobiopterin</name>
        <dbReference type="ChEBI" id="CHEBI:59560"/>
    </cofactor>
    <text evidence="3">Tetrahydrobiopterin (BH4). May stabilize the dimeric form of the enzyme.</text>
</comment>
<comment type="activity regulation">
    <text>Not stimulated by calcium/calmodulin.</text>
</comment>
<comment type="subunit">
    <text evidence="3">Homodimer.</text>
</comment>
<comment type="subcellular location">
    <subcellularLocation>
        <location evidence="3">Cytoplasm</location>
        <location evidence="3">Cytosol</location>
    </subcellularLocation>
</comment>
<comment type="induction">
    <text>By treatment with lipopolysaccharides (LPS) or cytokines, but not in osteoclasts where they are induced by calcium and PMA (phorbol 12-myristate 13-acetate).</text>
</comment>
<comment type="similarity">
    <text evidence="6">Belongs to the NOS family.</text>
</comment>